<gene>
    <name evidence="1" type="primary">rplO</name>
    <name type="ordered locus">LBJ_2640</name>
</gene>
<name>RL15_LEPBJ</name>
<comment type="function">
    <text evidence="1">Binds to the 23S rRNA.</text>
</comment>
<comment type="subunit">
    <text evidence="1">Part of the 50S ribosomal subunit.</text>
</comment>
<comment type="similarity">
    <text evidence="1">Belongs to the universal ribosomal protein uL15 family.</text>
</comment>
<reference key="1">
    <citation type="journal article" date="2006" name="Proc. Natl. Acad. Sci. U.S.A.">
        <title>Genome reduction in Leptospira borgpetersenii reflects limited transmission potential.</title>
        <authorList>
            <person name="Bulach D.M."/>
            <person name="Zuerner R.L."/>
            <person name="Wilson P."/>
            <person name="Seemann T."/>
            <person name="McGrath A."/>
            <person name="Cullen P.A."/>
            <person name="Davis J."/>
            <person name="Johnson M."/>
            <person name="Kuczek E."/>
            <person name="Alt D.P."/>
            <person name="Peterson-Burch B."/>
            <person name="Coppel R.L."/>
            <person name="Rood J.I."/>
            <person name="Davies J.K."/>
            <person name="Adler B."/>
        </authorList>
    </citation>
    <scope>NUCLEOTIDE SEQUENCE [LARGE SCALE GENOMIC DNA]</scope>
    <source>
        <strain>JB197</strain>
    </source>
</reference>
<proteinExistence type="inferred from homology"/>
<dbReference type="EMBL" id="CP000350">
    <property type="protein sequence ID" value="ABJ77063.1"/>
    <property type="molecule type" value="Genomic_DNA"/>
</dbReference>
<dbReference type="RefSeq" id="WP_002628318.1">
    <property type="nucleotide sequence ID" value="NC_008510.1"/>
</dbReference>
<dbReference type="SMR" id="Q04PV7"/>
<dbReference type="GeneID" id="61113628"/>
<dbReference type="KEGG" id="lbj:LBJ_2640"/>
<dbReference type="HOGENOM" id="CLU_055188_4_0_12"/>
<dbReference type="Proteomes" id="UP000000656">
    <property type="component" value="Chromosome 1"/>
</dbReference>
<dbReference type="GO" id="GO:0022625">
    <property type="term" value="C:cytosolic large ribosomal subunit"/>
    <property type="evidence" value="ECO:0007669"/>
    <property type="project" value="TreeGrafter"/>
</dbReference>
<dbReference type="GO" id="GO:0019843">
    <property type="term" value="F:rRNA binding"/>
    <property type="evidence" value="ECO:0007669"/>
    <property type="project" value="UniProtKB-UniRule"/>
</dbReference>
<dbReference type="GO" id="GO:0003735">
    <property type="term" value="F:structural constituent of ribosome"/>
    <property type="evidence" value="ECO:0007669"/>
    <property type="project" value="InterPro"/>
</dbReference>
<dbReference type="GO" id="GO:0006412">
    <property type="term" value="P:translation"/>
    <property type="evidence" value="ECO:0007669"/>
    <property type="project" value="UniProtKB-UniRule"/>
</dbReference>
<dbReference type="Gene3D" id="3.100.10.10">
    <property type="match status" value="1"/>
</dbReference>
<dbReference type="HAMAP" id="MF_01341">
    <property type="entry name" value="Ribosomal_uL15"/>
    <property type="match status" value="1"/>
</dbReference>
<dbReference type="InterPro" id="IPR030878">
    <property type="entry name" value="Ribosomal_uL15"/>
</dbReference>
<dbReference type="InterPro" id="IPR021131">
    <property type="entry name" value="Ribosomal_uL15/eL18"/>
</dbReference>
<dbReference type="InterPro" id="IPR036227">
    <property type="entry name" value="Ribosomal_uL15/eL18_sf"/>
</dbReference>
<dbReference type="InterPro" id="IPR005749">
    <property type="entry name" value="Ribosomal_uL15_bac-type"/>
</dbReference>
<dbReference type="InterPro" id="IPR001196">
    <property type="entry name" value="Ribosomal_uL15_CS"/>
</dbReference>
<dbReference type="NCBIfam" id="TIGR01071">
    <property type="entry name" value="rplO_bact"/>
    <property type="match status" value="1"/>
</dbReference>
<dbReference type="PANTHER" id="PTHR12934">
    <property type="entry name" value="50S RIBOSOMAL PROTEIN L15"/>
    <property type="match status" value="1"/>
</dbReference>
<dbReference type="PANTHER" id="PTHR12934:SF11">
    <property type="entry name" value="LARGE RIBOSOMAL SUBUNIT PROTEIN UL15M"/>
    <property type="match status" value="1"/>
</dbReference>
<dbReference type="Pfam" id="PF00828">
    <property type="entry name" value="Ribosomal_L27A"/>
    <property type="match status" value="1"/>
</dbReference>
<dbReference type="SUPFAM" id="SSF52080">
    <property type="entry name" value="Ribosomal proteins L15p and L18e"/>
    <property type="match status" value="1"/>
</dbReference>
<dbReference type="PROSITE" id="PS00475">
    <property type="entry name" value="RIBOSOMAL_L15"/>
    <property type="match status" value="1"/>
</dbReference>
<protein>
    <recommendedName>
        <fullName evidence="1">Large ribosomal subunit protein uL15</fullName>
    </recommendedName>
    <alternativeName>
        <fullName evidence="3">50S ribosomal protein L15</fullName>
    </alternativeName>
</protein>
<evidence type="ECO:0000255" key="1">
    <source>
        <dbReference type="HAMAP-Rule" id="MF_01341"/>
    </source>
</evidence>
<evidence type="ECO:0000256" key="2">
    <source>
        <dbReference type="SAM" id="MobiDB-lite"/>
    </source>
</evidence>
<evidence type="ECO:0000305" key="3"/>
<feature type="chain" id="PRO_1000054484" description="Large ribosomal subunit protein uL15">
    <location>
        <begin position="1"/>
        <end position="180"/>
    </location>
</feature>
<feature type="region of interest" description="Disordered" evidence="2">
    <location>
        <begin position="1"/>
        <end position="62"/>
    </location>
</feature>
<feature type="compositionally biased region" description="Basic residues" evidence="2">
    <location>
        <begin position="35"/>
        <end position="44"/>
    </location>
</feature>
<accession>Q04PV7</accession>
<sequence>MKKERLEQAAAFGKERAKKKKNTDTTSNLVPVPKGAKKEKKRVGRGPGSKVGKTAGRGSKGQYARNTVRRGFEGGQMPIHRRLPKRGFTAKFHKEFYPVNLRDIEKSGLTGNIDAKIMVQSKILDKETTLFKILGTGEIKKAIHVIADGFSQSAKEKIEKAGGSIKLRAEIELAASETKK</sequence>
<keyword id="KW-0687">Ribonucleoprotein</keyword>
<keyword id="KW-0689">Ribosomal protein</keyword>
<keyword id="KW-0694">RNA-binding</keyword>
<keyword id="KW-0699">rRNA-binding</keyword>
<organism>
    <name type="scientific">Leptospira borgpetersenii serovar Hardjo-bovis (strain JB197)</name>
    <dbReference type="NCBI Taxonomy" id="355277"/>
    <lineage>
        <taxon>Bacteria</taxon>
        <taxon>Pseudomonadati</taxon>
        <taxon>Spirochaetota</taxon>
        <taxon>Spirochaetia</taxon>
        <taxon>Leptospirales</taxon>
        <taxon>Leptospiraceae</taxon>
        <taxon>Leptospira</taxon>
    </lineage>
</organism>